<feature type="chain" id="PRO_0000454219" description="Ranatuerin-2LTa">
    <location>
        <begin position="1"/>
        <end position="28"/>
    </location>
</feature>
<feature type="disulfide bond" evidence="2">
    <location>
        <begin position="23"/>
        <end position="28"/>
    </location>
</feature>
<feature type="unsure residue" description="Assigned by comparison with orthologs" evidence="5">
    <location>
        <position position="2"/>
    </location>
</feature>
<feature type="unsure residue" description="Assigned by comparison with orthologs" evidence="5">
    <location>
        <position position="6"/>
    </location>
</feature>
<feature type="unsure residue" description="Assigned by comparison with orthologs" evidence="5">
    <location>
        <position position="13"/>
    </location>
</feature>
<feature type="unsure residue" description="Assigned by comparison with orthologs" evidence="5">
    <location>
        <position position="18"/>
    </location>
</feature>
<feature type="unsure residue" description="Assigned by comparison with orthologs" evidence="5">
    <location>
        <position position="21"/>
    </location>
</feature>
<sequence>GLMDALKGAAKNLFASALDKLKCKVTGC</sequence>
<name>RN2A_RANLT</name>
<comment type="function">
    <text evidence="1">Has antibacterial activity.</text>
</comment>
<comment type="subcellular location">
    <subcellularLocation>
        <location evidence="2">Secreted</location>
    </subcellularLocation>
</comment>
<comment type="tissue specificity">
    <text evidence="5">Expressed by the skin glands.</text>
</comment>
<comment type="mass spectrometry"/>
<comment type="similarity">
    <text evidence="4">Belongs to the frog skin active peptide (FSAP) family. Ranatuerin subfamily.</text>
</comment>
<proteinExistence type="evidence at protein level"/>
<protein>
    <recommendedName>
        <fullName evidence="3">Ranatuerin-2LTa</fullName>
    </recommendedName>
</protein>
<keyword id="KW-0878">Amphibian defense peptide</keyword>
<keyword id="KW-0044">Antibiotic</keyword>
<keyword id="KW-0929">Antimicrobial</keyword>
<keyword id="KW-0903">Direct protein sequencing</keyword>
<keyword id="KW-1015">Disulfide bond</keyword>
<keyword id="KW-0964">Secreted</keyword>
<accession>C0HLX9</accession>
<reference evidence="4" key="1">
    <citation type="journal article" date="2016" name="Rapid Commun. Mass Spectrom.">
        <title>LTQ Orbitrap Velos in routine de novo sequencing of non-tryptic skin peptides from the frog Rana latastei with traditional and reliable manual spectra interpretation.</title>
        <authorList>
            <person name="Samgina T.Y."/>
            <person name="Tolpina M.D."/>
            <person name="Trebse P."/>
            <person name="Torkar G."/>
            <person name="Artemenko K.A."/>
            <person name="Bergquist J."/>
            <person name="Lebedev A.T."/>
        </authorList>
    </citation>
    <scope>PROTEIN SEQUENCE</scope>
    <scope>IDENTIFICATION BY MASS SPECTROMETRY</scope>
    <scope>SUBCELLULAR LOCATION</scope>
    <scope>TISSUE SPECIFICITY</scope>
    <scope>DISULFIDE BOND</scope>
</reference>
<evidence type="ECO:0000250" key="1">
    <source>
        <dbReference type="UniProtKB" id="P86161"/>
    </source>
</evidence>
<evidence type="ECO:0000269" key="2">
    <source>
    </source>
</evidence>
<evidence type="ECO:0000303" key="3">
    <source>
    </source>
</evidence>
<evidence type="ECO:0000305" key="4"/>
<evidence type="ECO:0000305" key="5">
    <source>
    </source>
</evidence>
<dbReference type="SMR" id="C0HLX9"/>
<dbReference type="GO" id="GO:0005576">
    <property type="term" value="C:extracellular region"/>
    <property type="evidence" value="ECO:0007669"/>
    <property type="project" value="UniProtKB-SubCell"/>
</dbReference>
<dbReference type="GO" id="GO:0042742">
    <property type="term" value="P:defense response to bacterium"/>
    <property type="evidence" value="ECO:0007669"/>
    <property type="project" value="UniProtKB-KW"/>
</dbReference>
<dbReference type="InterPro" id="IPR012521">
    <property type="entry name" value="Antimicrobial_frog_2"/>
</dbReference>
<dbReference type="Pfam" id="PF08023">
    <property type="entry name" value="Antimicrobial_2"/>
    <property type="match status" value="1"/>
</dbReference>
<organism>
    <name type="scientific">Rana latastei</name>
    <name type="common">Italian agile frog</name>
    <dbReference type="NCBI Taxonomy" id="151453"/>
    <lineage>
        <taxon>Eukaryota</taxon>
        <taxon>Metazoa</taxon>
        <taxon>Chordata</taxon>
        <taxon>Craniata</taxon>
        <taxon>Vertebrata</taxon>
        <taxon>Euteleostomi</taxon>
        <taxon>Amphibia</taxon>
        <taxon>Batrachia</taxon>
        <taxon>Anura</taxon>
        <taxon>Neobatrachia</taxon>
        <taxon>Ranoidea</taxon>
        <taxon>Ranidae</taxon>
        <taxon>Rana</taxon>
        <taxon>Rana</taxon>
    </lineage>
</organism>